<organism>
    <name type="scientific">Cellulophaga algicola (strain DSM 14237 / IC166 / ACAM 630)</name>
    <dbReference type="NCBI Taxonomy" id="688270"/>
    <lineage>
        <taxon>Bacteria</taxon>
        <taxon>Pseudomonadati</taxon>
        <taxon>Bacteroidota</taxon>
        <taxon>Flavobacteriia</taxon>
        <taxon>Flavobacteriales</taxon>
        <taxon>Flavobacteriaceae</taxon>
        <taxon>Cellulophaga</taxon>
    </lineage>
</organism>
<name>QUEG_CELAD</name>
<evidence type="ECO:0000255" key="1">
    <source>
        <dbReference type="HAMAP-Rule" id="MF_00916"/>
    </source>
</evidence>
<comment type="function">
    <text evidence="1">Catalyzes the conversion of epoxyqueuosine (oQ) to queuosine (Q), which is a hypermodified base found in the wobble positions of tRNA(Asp), tRNA(Asn), tRNA(His) and tRNA(Tyr).</text>
</comment>
<comment type="catalytic activity">
    <reaction evidence="1">
        <text>epoxyqueuosine(34) in tRNA + AH2 = queuosine(34) in tRNA + A + H2O</text>
        <dbReference type="Rhea" id="RHEA:32159"/>
        <dbReference type="Rhea" id="RHEA-COMP:18571"/>
        <dbReference type="Rhea" id="RHEA-COMP:18582"/>
        <dbReference type="ChEBI" id="CHEBI:13193"/>
        <dbReference type="ChEBI" id="CHEBI:15377"/>
        <dbReference type="ChEBI" id="CHEBI:17499"/>
        <dbReference type="ChEBI" id="CHEBI:194431"/>
        <dbReference type="ChEBI" id="CHEBI:194443"/>
        <dbReference type="EC" id="1.17.99.6"/>
    </reaction>
</comment>
<comment type="cofactor">
    <cofactor evidence="1">
        <name>cob(II)alamin</name>
        <dbReference type="ChEBI" id="CHEBI:16304"/>
    </cofactor>
</comment>
<comment type="cofactor">
    <cofactor evidence="1">
        <name>[4Fe-4S] cluster</name>
        <dbReference type="ChEBI" id="CHEBI:49883"/>
    </cofactor>
    <text evidence="1">Binds 2 [4Fe-4S] clusters per monomer.</text>
</comment>
<comment type="pathway">
    <text evidence="1">tRNA modification; tRNA-queuosine biosynthesis.</text>
</comment>
<comment type="subunit">
    <text evidence="1">Monomer.</text>
</comment>
<comment type="subcellular location">
    <subcellularLocation>
        <location evidence="1">Cytoplasm</location>
    </subcellularLocation>
</comment>
<comment type="similarity">
    <text evidence="1">Belongs to the QueG family.</text>
</comment>
<proteinExistence type="inferred from homology"/>
<sequence>MNTKEKHSDLIKAEAIRLGFLSCGISKANFLEEEAPRLEKWLKNNMNGEMQYMENHFDKRLDPRLLVDDAKSVISLTLNYYPEEQQADGTYKISKYAYGHDYHHVIKGKLKQLQEFISEEIGEVGGRAFVDSAPVLDKAWAAKSGLGWIGKHSNLLTQKTGSFYFIAELIVDLDLTYDHPVTDHCGTCTACIDACPTQAIVQPYVVDGSKCISYFTIELKNEIPQEFQGKFDDWAFGCDVCQDVCPWNRFSKPHSEPLFNPHPDLLSLTKKDWEEITDDVFKKVFQKSAVKRTKYAGLKRNIDFLK</sequence>
<reference key="1">
    <citation type="journal article" date="2010" name="Stand. Genomic Sci.">
        <title>Complete genome sequence of Cellulophaga algicola type strain (IC166).</title>
        <authorList>
            <person name="Abt B."/>
            <person name="Lu M."/>
            <person name="Misra M."/>
            <person name="Han C."/>
            <person name="Nolan M."/>
            <person name="Lucas S."/>
            <person name="Hammon N."/>
            <person name="Deshpande S."/>
            <person name="Cheng J.F."/>
            <person name="Tapia R."/>
            <person name="Goodwin L."/>
            <person name="Pitluck S."/>
            <person name="Liolios K."/>
            <person name="Pagani I."/>
            <person name="Ivanova N."/>
            <person name="Mavromatis K."/>
            <person name="Ovchinikova G."/>
            <person name="Pati A."/>
            <person name="Chen A."/>
            <person name="Palaniappan K."/>
            <person name="Land M."/>
            <person name="Hauser L."/>
            <person name="Chang Y.J."/>
            <person name="Jeffries C.D."/>
            <person name="Detter J.C."/>
            <person name="Brambilla E."/>
            <person name="Rohde M."/>
            <person name="Tindall B.J."/>
            <person name="Goker M."/>
            <person name="Woyke T."/>
            <person name="Bristow J."/>
            <person name="Eisen J.A."/>
            <person name="Markowitz V."/>
            <person name="Hugenholtz P."/>
            <person name="Kyrpides N.C."/>
            <person name="Klenk H.P."/>
            <person name="Lapidus A."/>
        </authorList>
    </citation>
    <scope>NUCLEOTIDE SEQUENCE [LARGE SCALE GENOMIC DNA]</scope>
    <source>
        <strain>DSM 14237 / IC166 / ACAM 630</strain>
    </source>
</reference>
<keyword id="KW-0004">4Fe-4S</keyword>
<keyword id="KW-0963">Cytoplasm</keyword>
<keyword id="KW-0408">Iron</keyword>
<keyword id="KW-0411">Iron-sulfur</keyword>
<keyword id="KW-0479">Metal-binding</keyword>
<keyword id="KW-0560">Oxidoreductase</keyword>
<keyword id="KW-0671">Queuosine biosynthesis</keyword>
<keyword id="KW-1185">Reference proteome</keyword>
<keyword id="KW-0819">tRNA processing</keyword>
<accession>E6X4P3</accession>
<gene>
    <name evidence="1" type="primary">queG</name>
    <name type="ordered locus">Celal_2072</name>
</gene>
<protein>
    <recommendedName>
        <fullName evidence="1">Epoxyqueuosine reductase</fullName>
        <ecNumber evidence="1">1.17.99.6</ecNumber>
    </recommendedName>
    <alternativeName>
        <fullName evidence="1">Queuosine biosynthesis protein QueG</fullName>
    </alternativeName>
</protein>
<feature type="chain" id="PRO_0000416067" description="Epoxyqueuosine reductase">
    <location>
        <begin position="1"/>
        <end position="306"/>
    </location>
</feature>
<feature type="domain" description="4Fe-4S ferredoxin-type" evidence="1">
    <location>
        <begin position="173"/>
        <end position="205"/>
    </location>
</feature>
<feature type="active site" description="Proton donor" evidence="1">
    <location>
        <position position="131"/>
    </location>
</feature>
<feature type="binding site" evidence="1">
    <location>
        <position position="185"/>
    </location>
    <ligand>
        <name>[4Fe-4S] cluster</name>
        <dbReference type="ChEBI" id="CHEBI:49883"/>
        <label>1</label>
    </ligand>
</feature>
<feature type="binding site" evidence="1">
    <location>
        <position position="188"/>
    </location>
    <ligand>
        <name>[4Fe-4S] cluster</name>
        <dbReference type="ChEBI" id="CHEBI:49883"/>
        <label>1</label>
    </ligand>
</feature>
<feature type="binding site" evidence="1">
    <location>
        <position position="191"/>
    </location>
    <ligand>
        <name>[4Fe-4S] cluster</name>
        <dbReference type="ChEBI" id="CHEBI:49883"/>
        <label>1</label>
    </ligand>
</feature>
<feature type="binding site" evidence="1">
    <location>
        <position position="195"/>
    </location>
    <ligand>
        <name>[4Fe-4S] cluster</name>
        <dbReference type="ChEBI" id="CHEBI:49883"/>
        <label>2</label>
    </ligand>
</feature>
<feature type="binding site" evidence="1">
    <location>
        <position position="211"/>
    </location>
    <ligand>
        <name>[4Fe-4S] cluster</name>
        <dbReference type="ChEBI" id="CHEBI:49883"/>
        <label>2</label>
    </ligand>
</feature>
<feature type="binding site" evidence="1">
    <location>
        <position position="238"/>
    </location>
    <ligand>
        <name>[4Fe-4S] cluster</name>
        <dbReference type="ChEBI" id="CHEBI:49883"/>
        <label>2</label>
    </ligand>
</feature>
<feature type="binding site" evidence="1">
    <location>
        <position position="241"/>
    </location>
    <ligand>
        <name>[4Fe-4S] cluster</name>
        <dbReference type="ChEBI" id="CHEBI:49883"/>
        <label>2</label>
    </ligand>
</feature>
<feature type="binding site" evidence="1">
    <location>
        <position position="245"/>
    </location>
    <ligand>
        <name>[4Fe-4S] cluster</name>
        <dbReference type="ChEBI" id="CHEBI:49883"/>
        <label>1</label>
    </ligand>
</feature>
<dbReference type="EC" id="1.17.99.6" evidence="1"/>
<dbReference type="EMBL" id="CP002453">
    <property type="protein sequence ID" value="ADV49368.1"/>
    <property type="molecule type" value="Genomic_DNA"/>
</dbReference>
<dbReference type="RefSeq" id="WP_013550844.1">
    <property type="nucleotide sequence ID" value="NC_014934.1"/>
</dbReference>
<dbReference type="SMR" id="E6X4P3"/>
<dbReference type="STRING" id="688270.Celal_2072"/>
<dbReference type="KEGG" id="cao:Celal_2072"/>
<dbReference type="eggNOG" id="COG1600">
    <property type="taxonomic scope" value="Bacteria"/>
</dbReference>
<dbReference type="HOGENOM" id="CLU_030790_0_1_10"/>
<dbReference type="OrthoDB" id="9784571at2"/>
<dbReference type="UniPathway" id="UPA00392"/>
<dbReference type="Proteomes" id="UP000008634">
    <property type="component" value="Chromosome"/>
</dbReference>
<dbReference type="GO" id="GO:0005737">
    <property type="term" value="C:cytoplasm"/>
    <property type="evidence" value="ECO:0007669"/>
    <property type="project" value="UniProtKB-SubCell"/>
</dbReference>
<dbReference type="GO" id="GO:0051539">
    <property type="term" value="F:4 iron, 4 sulfur cluster binding"/>
    <property type="evidence" value="ECO:0007669"/>
    <property type="project" value="UniProtKB-KW"/>
</dbReference>
<dbReference type="GO" id="GO:0052693">
    <property type="term" value="F:epoxyqueuosine reductase activity"/>
    <property type="evidence" value="ECO:0007669"/>
    <property type="project" value="UniProtKB-UniRule"/>
</dbReference>
<dbReference type="GO" id="GO:0046872">
    <property type="term" value="F:metal ion binding"/>
    <property type="evidence" value="ECO:0007669"/>
    <property type="project" value="UniProtKB-KW"/>
</dbReference>
<dbReference type="GO" id="GO:0008616">
    <property type="term" value="P:queuosine biosynthetic process"/>
    <property type="evidence" value="ECO:0007669"/>
    <property type="project" value="UniProtKB-UniRule"/>
</dbReference>
<dbReference type="GO" id="GO:0006400">
    <property type="term" value="P:tRNA modification"/>
    <property type="evidence" value="ECO:0007669"/>
    <property type="project" value="UniProtKB-UniRule"/>
</dbReference>
<dbReference type="FunFam" id="3.30.70.20:FF:000037">
    <property type="entry name" value="Epoxyqueuosine reductase"/>
    <property type="match status" value="1"/>
</dbReference>
<dbReference type="Gene3D" id="3.30.70.20">
    <property type="match status" value="1"/>
</dbReference>
<dbReference type="HAMAP" id="MF_00916">
    <property type="entry name" value="QueG"/>
    <property type="match status" value="1"/>
</dbReference>
<dbReference type="InterPro" id="IPR017896">
    <property type="entry name" value="4Fe4S_Fe-S-bd"/>
</dbReference>
<dbReference type="InterPro" id="IPR017900">
    <property type="entry name" value="4Fe4S_Fe_S_CS"/>
</dbReference>
<dbReference type="InterPro" id="IPR004453">
    <property type="entry name" value="QueG"/>
</dbReference>
<dbReference type="InterPro" id="IPR013542">
    <property type="entry name" value="QueG_DUF1730"/>
</dbReference>
<dbReference type="NCBIfam" id="TIGR00276">
    <property type="entry name" value="tRNA epoxyqueuosine(34) reductase QueG"/>
    <property type="match status" value="1"/>
</dbReference>
<dbReference type="PANTHER" id="PTHR30002">
    <property type="entry name" value="EPOXYQUEUOSINE REDUCTASE"/>
    <property type="match status" value="1"/>
</dbReference>
<dbReference type="PANTHER" id="PTHR30002:SF4">
    <property type="entry name" value="EPOXYQUEUOSINE REDUCTASE"/>
    <property type="match status" value="1"/>
</dbReference>
<dbReference type="Pfam" id="PF13484">
    <property type="entry name" value="Fer4_16"/>
    <property type="match status" value="1"/>
</dbReference>
<dbReference type="Pfam" id="PF08331">
    <property type="entry name" value="QueG_DUF1730"/>
    <property type="match status" value="1"/>
</dbReference>
<dbReference type="SUPFAM" id="SSF46548">
    <property type="entry name" value="alpha-helical ferredoxin"/>
    <property type="match status" value="1"/>
</dbReference>
<dbReference type="PROSITE" id="PS00198">
    <property type="entry name" value="4FE4S_FER_1"/>
    <property type="match status" value="1"/>
</dbReference>
<dbReference type="PROSITE" id="PS51379">
    <property type="entry name" value="4FE4S_FER_2"/>
    <property type="match status" value="1"/>
</dbReference>